<comment type="function">
    <text evidence="1">Cysteine protease.</text>
</comment>
<comment type="subcellular location">
    <subcellularLocation>
        <location evidence="3">Membrane</location>
        <topology evidence="8">Single-pass type II membrane protein</topology>
    </subcellularLocation>
</comment>
<comment type="similarity">
    <text evidence="5">Belongs to the peptidase C1 family.</text>
</comment>
<keyword id="KW-1015">Disulfide bond</keyword>
<keyword id="KW-0325">Glycoprotein</keyword>
<keyword id="KW-0378">Hydrolase</keyword>
<keyword id="KW-0472">Membrane</keyword>
<keyword id="KW-0645">Protease</keyword>
<keyword id="KW-0735">Signal-anchor</keyword>
<keyword id="KW-0788">Thiol protease</keyword>
<keyword id="KW-0812">Transmembrane</keyword>
<keyword id="KW-1133">Transmembrane helix</keyword>
<keyword id="KW-0865">Zymogen</keyword>
<name>PVP1_PLAVN</name>
<organism>
    <name type="scientific">Plasmodium vinckei</name>
    <dbReference type="NCBI Taxonomy" id="5860"/>
    <lineage>
        <taxon>Eukaryota</taxon>
        <taxon>Sar</taxon>
        <taxon>Alveolata</taxon>
        <taxon>Apicomplexa</taxon>
        <taxon>Aconoidasida</taxon>
        <taxon>Haemosporida</taxon>
        <taxon>Plasmodiidae</taxon>
        <taxon>Plasmodium</taxon>
        <taxon>Plasmodium (Vinckeia)</taxon>
    </lineage>
</organism>
<reference key="1">
    <citation type="journal article" date="1993" name="Biochim. Biophys. Acta">
        <title>A Plasmodium vinckei cysteine proteinase shares unique features with its Plasmodium falciparum analogue.</title>
        <authorList>
            <person name="Rosenthal P.J."/>
        </authorList>
    </citation>
    <scope>NUCLEOTIDE SEQUENCE [GENOMIC DNA]</scope>
</reference>
<dbReference type="EC" id="3.4.22.-" evidence="1"/>
<dbReference type="EMBL" id="L08500">
    <property type="status" value="NOT_ANNOTATED_CDS"/>
    <property type="molecule type" value="Genomic_DNA"/>
</dbReference>
<dbReference type="PIR" id="S32561">
    <property type="entry name" value="S32561"/>
</dbReference>
<dbReference type="SMR" id="P46102"/>
<dbReference type="MEROPS" id="C01.077"/>
<dbReference type="VEuPathDB" id="PlasmoDB:PVBDA_1302530"/>
<dbReference type="VEuPathDB" id="PlasmoDB:PVLDE_1302760"/>
<dbReference type="VEuPathDB" id="PlasmoDB:PVPCR_1302640"/>
<dbReference type="VEuPathDB" id="PlasmoDB:PVSEL_1302520"/>
<dbReference type="VEuPathDB" id="PlasmoDB:PVVCY_1302320"/>
<dbReference type="VEuPathDB" id="PlasmoDB:YYE_00220"/>
<dbReference type="VEuPathDB" id="PlasmoDB:YYG_03508"/>
<dbReference type="GO" id="GO:0016020">
    <property type="term" value="C:membrane"/>
    <property type="evidence" value="ECO:0007669"/>
    <property type="project" value="UniProtKB-SubCell"/>
</dbReference>
<dbReference type="GO" id="GO:0008234">
    <property type="term" value="F:cysteine-type peptidase activity"/>
    <property type="evidence" value="ECO:0007669"/>
    <property type="project" value="UniProtKB-KW"/>
</dbReference>
<dbReference type="GO" id="GO:0006508">
    <property type="term" value="P:proteolysis"/>
    <property type="evidence" value="ECO:0007669"/>
    <property type="project" value="UniProtKB-KW"/>
</dbReference>
<dbReference type="CDD" id="cd02248">
    <property type="entry name" value="Peptidase_C1A"/>
    <property type="match status" value="1"/>
</dbReference>
<dbReference type="Gene3D" id="3.90.70.10">
    <property type="entry name" value="Cysteine proteinases"/>
    <property type="match status" value="1"/>
</dbReference>
<dbReference type="InterPro" id="IPR038765">
    <property type="entry name" value="Papain-like_cys_pep_sf"/>
</dbReference>
<dbReference type="InterPro" id="IPR025661">
    <property type="entry name" value="Pept_asp_AS"/>
</dbReference>
<dbReference type="InterPro" id="IPR000169">
    <property type="entry name" value="Pept_cys_AS"/>
</dbReference>
<dbReference type="InterPro" id="IPR025660">
    <property type="entry name" value="Pept_his_AS"/>
</dbReference>
<dbReference type="InterPro" id="IPR013128">
    <property type="entry name" value="Peptidase_C1A"/>
</dbReference>
<dbReference type="InterPro" id="IPR000668">
    <property type="entry name" value="Peptidase_C1A_C"/>
</dbReference>
<dbReference type="InterPro" id="IPR039417">
    <property type="entry name" value="Peptidase_C1A_papain-like"/>
</dbReference>
<dbReference type="InterPro" id="IPR013201">
    <property type="entry name" value="Prot_inhib_I29"/>
</dbReference>
<dbReference type="PANTHER" id="PTHR12411">
    <property type="entry name" value="CYSTEINE PROTEASE FAMILY C1-RELATED"/>
    <property type="match status" value="1"/>
</dbReference>
<dbReference type="Pfam" id="PF08246">
    <property type="entry name" value="Inhibitor_I29"/>
    <property type="match status" value="1"/>
</dbReference>
<dbReference type="Pfam" id="PF00112">
    <property type="entry name" value="Peptidase_C1"/>
    <property type="match status" value="1"/>
</dbReference>
<dbReference type="PRINTS" id="PR00705">
    <property type="entry name" value="PAPAIN"/>
</dbReference>
<dbReference type="SMART" id="SM00848">
    <property type="entry name" value="Inhibitor_I29"/>
    <property type="match status" value="1"/>
</dbReference>
<dbReference type="SMART" id="SM00645">
    <property type="entry name" value="Pept_C1"/>
    <property type="match status" value="1"/>
</dbReference>
<dbReference type="SUPFAM" id="SSF54001">
    <property type="entry name" value="Cysteine proteinases"/>
    <property type="match status" value="1"/>
</dbReference>
<dbReference type="PROSITE" id="PS00640">
    <property type="entry name" value="THIOL_PROTEASE_ASN"/>
    <property type="match status" value="1"/>
</dbReference>
<dbReference type="PROSITE" id="PS00139">
    <property type="entry name" value="THIOL_PROTEASE_CYS"/>
    <property type="match status" value="1"/>
</dbReference>
<dbReference type="PROSITE" id="PS00639">
    <property type="entry name" value="THIOL_PROTEASE_HIS"/>
    <property type="match status" value="1"/>
</dbReference>
<accession>P46102</accession>
<evidence type="ECO:0000250" key="1">
    <source>
        <dbReference type="UniProtKB" id="P25805"/>
    </source>
</evidence>
<evidence type="ECO:0000250" key="2">
    <source>
        <dbReference type="UniProtKB" id="Q8I6U4"/>
    </source>
</evidence>
<evidence type="ECO:0000255" key="3"/>
<evidence type="ECO:0000255" key="4">
    <source>
        <dbReference type="PROSITE-ProRule" id="PRU00498"/>
    </source>
</evidence>
<evidence type="ECO:0000255" key="5">
    <source>
        <dbReference type="PROSITE-ProRule" id="PRU10088"/>
    </source>
</evidence>
<evidence type="ECO:0000255" key="6">
    <source>
        <dbReference type="PROSITE-ProRule" id="PRU10089"/>
    </source>
</evidence>
<evidence type="ECO:0000255" key="7">
    <source>
        <dbReference type="PROSITE-ProRule" id="PRU10090"/>
    </source>
</evidence>
<evidence type="ECO:0000305" key="8"/>
<sequence>MSDNIGQINFTIPGIQSLDENDTYLKINHKKTIKICAYAITAIALFFIGGVFFKNQAKINALDAIDEAVLMNKEIAHLREILNKYKATINEDDEFVYQAYDNKNGDSENQLLLMLHKLLKNNANKVNTFDVNNESNKNIDPTYIFRQKLESMQDNIKYASKFFKYMKENNKKYENMDEQLQRFENFKIRYMKTQKHNEMVGKNGLTYVQKVNQYSDFSKEEFDNYFKKLLSVPMDLKSKYIVPLKKHLANTNLISVDNKSKDFPDSRDYRSKFNFLPPKDQGNCGSCWAFAAIGNFEYLYVHTRHEMPISFSEQQMVDCSTENYGCDGGNPFYAFLYMINNGVCLGDEYPYKGHEDFFCLNYRCSLLGRVHFIGDVKPNELIMALNYVGPVTIAVGASEDFVLYSGGVFDGECNPELNHSVLLVGYGQVKKSLAFEDSHSNVDSNLIKKYKENIKGDDDDDIIYYWIVRNSWGPNWGEGGYIRIKRNKAGDDGFCGVGSDVFFPIY</sequence>
<protein>
    <recommendedName>
        <fullName evidence="8">Vinckepain-1</fullName>
        <ecNumber evidence="1">3.4.22.-</ecNumber>
    </recommendedName>
    <alternativeName>
        <fullName evidence="8">Cysteine proteinase vinckepain-1</fullName>
    </alternativeName>
</protein>
<feature type="propeptide" id="PRO_0000026475" description="Activation peptide" evidence="3">
    <location>
        <begin position="1"/>
        <end position="262"/>
    </location>
</feature>
<feature type="chain" id="PRO_0000026476" description="Vinckepain-1">
    <location>
        <begin position="263"/>
        <end position="506"/>
    </location>
</feature>
<feature type="topological domain" description="Cytoplasmic" evidence="8">
    <location>
        <begin position="1"/>
        <end position="32"/>
    </location>
</feature>
<feature type="transmembrane region" description="Helical; Signal-anchor for type II membrane protein" evidence="3">
    <location>
        <begin position="33"/>
        <end position="53"/>
    </location>
</feature>
<feature type="topological domain" description="Lumenal" evidence="8">
    <location>
        <begin position="54"/>
        <end position="506"/>
    </location>
</feature>
<feature type="active site" evidence="5">
    <location>
        <position position="287"/>
    </location>
</feature>
<feature type="active site" evidence="6">
    <location>
        <position position="419"/>
    </location>
</feature>
<feature type="active site" evidence="7">
    <location>
        <position position="470"/>
    </location>
</feature>
<feature type="glycosylation site" description="N-linked (GlcNAc...) asparagine" evidence="4">
    <location>
        <position position="133"/>
    </location>
</feature>
<feature type="glycosylation site" description="N-linked (GlcNAc...) asparagine" evidence="4">
    <location>
        <position position="258"/>
    </location>
</feature>
<feature type="glycosylation site" description="N-linked (GlcNAc...) asparagine" evidence="4">
    <location>
        <position position="418"/>
    </location>
</feature>
<feature type="disulfide bond" evidence="2">
    <location>
        <begin position="284"/>
        <end position="326"/>
    </location>
</feature>
<feature type="disulfide bond" evidence="2">
    <location>
        <begin position="319"/>
        <end position="359"/>
    </location>
</feature>
<feature type="disulfide bond" evidence="2">
    <location>
        <begin position="344"/>
        <end position="364"/>
    </location>
</feature>
<feature type="disulfide bond" evidence="2">
    <location>
        <begin position="413"/>
        <end position="495"/>
    </location>
</feature>
<gene>
    <name evidence="8" type="primary">VP1</name>
    <name evidence="8" type="synonym">VP-1</name>
</gene>
<proteinExistence type="inferred from homology"/>